<comment type="function">
    <text evidence="1">Involved in lipopolysaccharide (LPS) biosynthesis. Translocates lipid A-core from the inner to the outer leaflet of the inner membrane. Transmembrane domains (TMD) form a pore in the inner membrane and the ATP-binding domain (NBD) is responsible for energy generation.</text>
</comment>
<comment type="catalytic activity">
    <reaction evidence="1">
        <text>ATP + H2O + lipid A-core oligosaccharideSide 1 = ADP + phosphate + lipid A-core oligosaccharideSide 2.</text>
        <dbReference type="EC" id="7.5.2.6"/>
    </reaction>
</comment>
<comment type="subunit">
    <text evidence="1">Homodimer.</text>
</comment>
<comment type="subcellular location">
    <subcellularLocation>
        <location evidence="1">Cell inner membrane</location>
        <topology evidence="1">Multi-pass membrane protein</topology>
    </subcellularLocation>
</comment>
<comment type="domain">
    <text evidence="1">In MsbA the ATP-binding domain (NBD) and the transmembrane domain (TMD) are fused.</text>
</comment>
<comment type="similarity">
    <text evidence="1">Belongs to the ABC transporter superfamily. Lipid exporter (TC 3.A.1.106) family.</text>
</comment>
<gene>
    <name evidence="1" type="primary">msbA</name>
    <name type="ordered locus">XOO2297</name>
</gene>
<organism>
    <name type="scientific">Xanthomonas oryzae pv. oryzae (strain KACC10331 / KXO85)</name>
    <dbReference type="NCBI Taxonomy" id="291331"/>
    <lineage>
        <taxon>Bacteria</taxon>
        <taxon>Pseudomonadati</taxon>
        <taxon>Pseudomonadota</taxon>
        <taxon>Gammaproteobacteria</taxon>
        <taxon>Lysobacterales</taxon>
        <taxon>Lysobacteraceae</taxon>
        <taxon>Xanthomonas</taxon>
    </lineage>
</organism>
<name>MSBA_XANOR</name>
<reference key="1">
    <citation type="journal article" date="2005" name="Nucleic Acids Res.">
        <title>The genome sequence of Xanthomonas oryzae pathovar oryzae KACC10331, the bacterial blight pathogen of rice.</title>
        <authorList>
            <person name="Lee B.-M."/>
            <person name="Park Y.-J."/>
            <person name="Park D.-S."/>
            <person name="Kang H.-W."/>
            <person name="Kim J.-G."/>
            <person name="Song E.-S."/>
            <person name="Park I.-C."/>
            <person name="Yoon U.-H."/>
            <person name="Hahn J.-H."/>
            <person name="Koo B.-S."/>
            <person name="Lee G.-B."/>
            <person name="Kim H."/>
            <person name="Park H.-S."/>
            <person name="Yoon K.-O."/>
            <person name="Kim J.-H."/>
            <person name="Jung C.-H."/>
            <person name="Koh N.-H."/>
            <person name="Seo J.-S."/>
            <person name="Go S.-J."/>
        </authorList>
    </citation>
    <scope>NUCLEOTIDE SEQUENCE [LARGE SCALE GENOMIC DNA]</scope>
    <source>
        <strain>KACC10331 / KXO85</strain>
    </source>
</reference>
<sequence>MTNSTDRPVSVSSWRTYRRLVAFAKPYRLLLVAALIAALIEAAGTTGFLALMKPITDETFIYKNAEVSRWLPVQIILLFVVRGIAGYITDMAMGKSARSIARDLRIKVMAKYLRLPGSRFDSEPVPSMLIRLGSDSDQVAQAAVDAIKVMIQQSLQVIGALALMLWHSWQVTLTILVLAPVLAWVMDKVARRYRRISHSIQESGAHLLQAADQTLSSHQEVKIYGAQQTEMERYGALADRNLRLAMKVESTRGISTATVQMIGAIGLSALLFVAGAQALAGRLTAGDFVVLMTSMLTIIPGLKQLTNVQNMVQRGLASAERLFSVLDSPDEPDQGAVALTRAKGLIEFRDVTARYPGQVNPALADVSFIAQPGTVTAIVGRSGSGKSSLIKLIPRFYDAEAGQILLDGQPVQAYALADLRRQIALVGQQVMLFDGSIAENVAFGEMRSADASQLERAILGANAMEFVAQLPEGLQSHVGAKGGRLSGGQRQRLAIARAMLKDAPILILDEATAALDNESERLVQDALHKLMPDRTTLVIAHRLSTIEHADQVLVMDQGRIVERGTHHELLAQGGLYSHLHGMQFRERQA</sequence>
<evidence type="ECO:0000255" key="1">
    <source>
        <dbReference type="HAMAP-Rule" id="MF_01703"/>
    </source>
</evidence>
<accession>Q5H0H0</accession>
<feature type="chain" id="PRO_0000271666" description="ATP-dependent lipid A-core flippase">
    <location>
        <begin position="1"/>
        <end position="589"/>
    </location>
</feature>
<feature type="transmembrane region" description="Helical" evidence="1">
    <location>
        <begin position="29"/>
        <end position="49"/>
    </location>
</feature>
<feature type="transmembrane region" description="Helical" evidence="1">
    <location>
        <begin position="70"/>
        <end position="90"/>
    </location>
</feature>
<feature type="transmembrane region" description="Helical" evidence="1">
    <location>
        <begin position="157"/>
        <end position="177"/>
    </location>
</feature>
<feature type="transmembrane region" description="Helical" evidence="1">
    <location>
        <begin position="261"/>
        <end position="281"/>
    </location>
</feature>
<feature type="transmembrane region" description="Helical" evidence="1">
    <location>
        <begin position="283"/>
        <end position="303"/>
    </location>
</feature>
<feature type="domain" description="ABC transmembrane type-1" evidence="1">
    <location>
        <begin position="32"/>
        <end position="314"/>
    </location>
</feature>
<feature type="domain" description="ABC transporter" evidence="1">
    <location>
        <begin position="346"/>
        <end position="582"/>
    </location>
</feature>
<feature type="binding site" evidence="1">
    <location>
        <begin position="380"/>
        <end position="387"/>
    </location>
    <ligand>
        <name>ATP</name>
        <dbReference type="ChEBI" id="CHEBI:30616"/>
    </ligand>
</feature>
<keyword id="KW-0067">ATP-binding</keyword>
<keyword id="KW-0997">Cell inner membrane</keyword>
<keyword id="KW-1003">Cell membrane</keyword>
<keyword id="KW-0445">Lipid transport</keyword>
<keyword id="KW-0472">Membrane</keyword>
<keyword id="KW-0547">Nucleotide-binding</keyword>
<keyword id="KW-1185">Reference proteome</keyword>
<keyword id="KW-1278">Translocase</keyword>
<keyword id="KW-0812">Transmembrane</keyword>
<keyword id="KW-1133">Transmembrane helix</keyword>
<keyword id="KW-0813">Transport</keyword>
<proteinExistence type="inferred from homology"/>
<dbReference type="EC" id="7.5.2.6" evidence="1"/>
<dbReference type="EMBL" id="AE013598">
    <property type="protein sequence ID" value="AAW75551.1"/>
    <property type="molecule type" value="Genomic_DNA"/>
</dbReference>
<dbReference type="SMR" id="Q5H0H0"/>
<dbReference type="STRING" id="291331.XOO2297"/>
<dbReference type="KEGG" id="xoo:XOO2297"/>
<dbReference type="HOGENOM" id="CLU_000604_84_3_6"/>
<dbReference type="Proteomes" id="UP000006735">
    <property type="component" value="Chromosome"/>
</dbReference>
<dbReference type="GO" id="GO:0005886">
    <property type="term" value="C:plasma membrane"/>
    <property type="evidence" value="ECO:0007669"/>
    <property type="project" value="UniProtKB-SubCell"/>
</dbReference>
<dbReference type="GO" id="GO:0015421">
    <property type="term" value="F:ABC-type oligopeptide transporter activity"/>
    <property type="evidence" value="ECO:0007669"/>
    <property type="project" value="TreeGrafter"/>
</dbReference>
<dbReference type="GO" id="GO:0005524">
    <property type="term" value="F:ATP binding"/>
    <property type="evidence" value="ECO:0007669"/>
    <property type="project" value="UniProtKB-KW"/>
</dbReference>
<dbReference type="GO" id="GO:0016887">
    <property type="term" value="F:ATP hydrolysis activity"/>
    <property type="evidence" value="ECO:0007669"/>
    <property type="project" value="InterPro"/>
</dbReference>
<dbReference type="GO" id="GO:0034040">
    <property type="term" value="F:ATPase-coupled lipid transmembrane transporter activity"/>
    <property type="evidence" value="ECO:0007669"/>
    <property type="project" value="InterPro"/>
</dbReference>
<dbReference type="CDD" id="cd18552">
    <property type="entry name" value="ABC_6TM_MsbA_like"/>
    <property type="match status" value="1"/>
</dbReference>
<dbReference type="FunFam" id="1.20.1560.10:FF:000103">
    <property type="entry name" value="Lipid A export ATP-binding/permease protein MsbA"/>
    <property type="match status" value="1"/>
</dbReference>
<dbReference type="FunFam" id="3.40.50.300:FF:000221">
    <property type="entry name" value="Multidrug ABC transporter ATP-binding protein"/>
    <property type="match status" value="1"/>
</dbReference>
<dbReference type="Gene3D" id="1.20.1560.10">
    <property type="entry name" value="ABC transporter type 1, transmembrane domain"/>
    <property type="match status" value="1"/>
</dbReference>
<dbReference type="Gene3D" id="3.40.50.300">
    <property type="entry name" value="P-loop containing nucleotide triphosphate hydrolases"/>
    <property type="match status" value="1"/>
</dbReference>
<dbReference type="InterPro" id="IPR003593">
    <property type="entry name" value="AAA+_ATPase"/>
</dbReference>
<dbReference type="InterPro" id="IPR011527">
    <property type="entry name" value="ABC1_TM_dom"/>
</dbReference>
<dbReference type="InterPro" id="IPR036640">
    <property type="entry name" value="ABC1_TM_sf"/>
</dbReference>
<dbReference type="InterPro" id="IPR003439">
    <property type="entry name" value="ABC_transporter-like_ATP-bd"/>
</dbReference>
<dbReference type="InterPro" id="IPR017871">
    <property type="entry name" value="ABC_transporter-like_CS"/>
</dbReference>
<dbReference type="InterPro" id="IPR011917">
    <property type="entry name" value="ABC_transpr_lipidA"/>
</dbReference>
<dbReference type="InterPro" id="IPR027417">
    <property type="entry name" value="P-loop_NTPase"/>
</dbReference>
<dbReference type="InterPro" id="IPR039421">
    <property type="entry name" value="Type_1_exporter"/>
</dbReference>
<dbReference type="NCBIfam" id="TIGR02203">
    <property type="entry name" value="MsbA_lipidA"/>
    <property type="match status" value="1"/>
</dbReference>
<dbReference type="PANTHER" id="PTHR43394:SF1">
    <property type="entry name" value="ATP-BINDING CASSETTE SUB-FAMILY B MEMBER 10, MITOCHONDRIAL"/>
    <property type="match status" value="1"/>
</dbReference>
<dbReference type="PANTHER" id="PTHR43394">
    <property type="entry name" value="ATP-DEPENDENT PERMEASE MDL1, MITOCHONDRIAL"/>
    <property type="match status" value="1"/>
</dbReference>
<dbReference type="Pfam" id="PF00664">
    <property type="entry name" value="ABC_membrane"/>
    <property type="match status" value="1"/>
</dbReference>
<dbReference type="Pfam" id="PF00005">
    <property type="entry name" value="ABC_tran"/>
    <property type="match status" value="1"/>
</dbReference>
<dbReference type="SMART" id="SM00382">
    <property type="entry name" value="AAA"/>
    <property type="match status" value="1"/>
</dbReference>
<dbReference type="SUPFAM" id="SSF90123">
    <property type="entry name" value="ABC transporter transmembrane region"/>
    <property type="match status" value="1"/>
</dbReference>
<dbReference type="SUPFAM" id="SSF52540">
    <property type="entry name" value="P-loop containing nucleoside triphosphate hydrolases"/>
    <property type="match status" value="1"/>
</dbReference>
<dbReference type="PROSITE" id="PS50929">
    <property type="entry name" value="ABC_TM1F"/>
    <property type="match status" value="1"/>
</dbReference>
<dbReference type="PROSITE" id="PS00211">
    <property type="entry name" value="ABC_TRANSPORTER_1"/>
    <property type="match status" value="1"/>
</dbReference>
<dbReference type="PROSITE" id="PS50893">
    <property type="entry name" value="ABC_TRANSPORTER_2"/>
    <property type="match status" value="1"/>
</dbReference>
<dbReference type="PROSITE" id="PS51239">
    <property type="entry name" value="MSBA"/>
    <property type="match status" value="1"/>
</dbReference>
<protein>
    <recommendedName>
        <fullName evidence="1">ATP-dependent lipid A-core flippase</fullName>
        <ecNumber evidence="1">7.5.2.6</ecNumber>
    </recommendedName>
    <alternativeName>
        <fullName evidence="1">Lipid A export ATP-binding/permease protein MsbA</fullName>
    </alternativeName>
</protein>